<comment type="catalytic activity">
    <reaction>
        <text>tRNA(Lys) + L-lysine + ATP = L-lysyl-tRNA(Lys) + AMP + diphosphate</text>
        <dbReference type="Rhea" id="RHEA:20792"/>
        <dbReference type="Rhea" id="RHEA-COMP:9696"/>
        <dbReference type="Rhea" id="RHEA-COMP:9697"/>
        <dbReference type="ChEBI" id="CHEBI:30616"/>
        <dbReference type="ChEBI" id="CHEBI:32551"/>
        <dbReference type="ChEBI" id="CHEBI:33019"/>
        <dbReference type="ChEBI" id="CHEBI:78442"/>
        <dbReference type="ChEBI" id="CHEBI:78529"/>
        <dbReference type="ChEBI" id="CHEBI:456215"/>
        <dbReference type="EC" id="6.1.1.6"/>
    </reaction>
</comment>
<comment type="cofactor">
    <cofactor evidence="1">
        <name>Mg(2+)</name>
        <dbReference type="ChEBI" id="CHEBI:18420"/>
    </cofactor>
    <text evidence="1">Binds 3 Mg(2+) ions per subunit.</text>
</comment>
<comment type="subunit">
    <text evidence="1">Homodimer.</text>
</comment>
<comment type="subcellular location">
    <subcellularLocation>
        <location evidence="1">Cytoplasm</location>
    </subcellularLocation>
</comment>
<comment type="similarity">
    <text evidence="2">Belongs to the class-II aminoacyl-tRNA synthetase family.</text>
</comment>
<keyword id="KW-0030">Aminoacyl-tRNA synthetase</keyword>
<keyword id="KW-0067">ATP-binding</keyword>
<keyword id="KW-0963">Cytoplasm</keyword>
<keyword id="KW-0436">Ligase</keyword>
<keyword id="KW-0460">Magnesium</keyword>
<keyword id="KW-0479">Metal-binding</keyword>
<keyword id="KW-0547">Nucleotide-binding</keyword>
<keyword id="KW-0648">Protein biosynthesis</keyword>
<accession>Q46464</accession>
<proteinExistence type="inferred from homology"/>
<name>SYK_CAMUP</name>
<feature type="chain" id="PRO_0000152609" description="Lysine--tRNA ligase">
    <location>
        <begin position="1" status="less than"/>
        <end position="10"/>
    </location>
</feature>
<feature type="non-terminal residue">
    <location>
        <position position="1"/>
    </location>
</feature>
<gene>
    <name type="primary">lysS</name>
</gene>
<dbReference type="EC" id="6.1.1.6"/>
<dbReference type="EMBL" id="L77076">
    <property type="protein sequence ID" value="AAB41342.1"/>
    <property type="molecule type" value="Genomic_DNA"/>
</dbReference>
<dbReference type="GO" id="GO:0005737">
    <property type="term" value="C:cytoplasm"/>
    <property type="evidence" value="ECO:0007669"/>
    <property type="project" value="UniProtKB-SubCell"/>
</dbReference>
<dbReference type="GO" id="GO:0005524">
    <property type="term" value="F:ATP binding"/>
    <property type="evidence" value="ECO:0007669"/>
    <property type="project" value="UniProtKB-KW"/>
</dbReference>
<dbReference type="GO" id="GO:0004824">
    <property type="term" value="F:lysine-tRNA ligase activity"/>
    <property type="evidence" value="ECO:0007669"/>
    <property type="project" value="UniProtKB-EC"/>
</dbReference>
<dbReference type="GO" id="GO:0046872">
    <property type="term" value="F:metal ion binding"/>
    <property type="evidence" value="ECO:0007669"/>
    <property type="project" value="UniProtKB-KW"/>
</dbReference>
<dbReference type="GO" id="GO:0006412">
    <property type="term" value="P:translation"/>
    <property type="evidence" value="ECO:0007669"/>
    <property type="project" value="UniProtKB-KW"/>
</dbReference>
<reference key="1">
    <citation type="journal article" date="1996" name="Gene">
        <title>Characterization of Campylobacter upsaliensis fur and its localization in a highly conserved region of the Campylobacter genome.</title>
        <authorList>
            <person name="Bourke B."/>
            <person name="Al-Rashid S.T."/>
            <person name="Bingham H.L."/>
            <person name="Chan V.L."/>
        </authorList>
    </citation>
    <scope>NUCLEOTIDE SEQUENCE [GENOMIC DNA]</scope>
    <source>
        <strain>ATCC 43954 / DSM 5365 / CCUG 14913 / LMG 8850 / NCTC 11541</strain>
    </source>
</reference>
<organism>
    <name type="scientific">Campylobacter upsaliensis</name>
    <dbReference type="NCBI Taxonomy" id="28080"/>
    <lineage>
        <taxon>Bacteria</taxon>
        <taxon>Pseudomonadati</taxon>
        <taxon>Campylobacterota</taxon>
        <taxon>Epsilonproteobacteria</taxon>
        <taxon>Campylobacterales</taxon>
        <taxon>Campylobacteraceae</taxon>
        <taxon>Campylobacter</taxon>
    </lineage>
</organism>
<sequence length="10" mass="1218">LKSELKEDKE</sequence>
<protein>
    <recommendedName>
        <fullName>Lysine--tRNA ligase</fullName>
        <ecNumber>6.1.1.6</ecNumber>
    </recommendedName>
    <alternativeName>
        <fullName>Lysyl-tRNA synthetase</fullName>
        <shortName>LysRS</shortName>
    </alternativeName>
</protein>
<evidence type="ECO:0000250" key="1"/>
<evidence type="ECO:0000305" key="2"/>